<evidence type="ECO:0000255" key="1">
    <source>
        <dbReference type="HAMAP-Rule" id="MF_00185"/>
    </source>
</evidence>
<evidence type="ECO:0000305" key="2"/>
<comment type="function">
    <text evidence="1">Catalyzes the transfer of a dimethylallyl group onto the adenine at position 37 in tRNAs that read codons beginning with uridine, leading to the formation of N6-(dimethylallyl)adenosine (i(6)A).</text>
</comment>
<comment type="catalytic activity">
    <reaction evidence="1">
        <text>adenosine(37) in tRNA + dimethylallyl diphosphate = N(6)-dimethylallyladenosine(37) in tRNA + diphosphate</text>
        <dbReference type="Rhea" id="RHEA:26482"/>
        <dbReference type="Rhea" id="RHEA-COMP:10162"/>
        <dbReference type="Rhea" id="RHEA-COMP:10375"/>
        <dbReference type="ChEBI" id="CHEBI:33019"/>
        <dbReference type="ChEBI" id="CHEBI:57623"/>
        <dbReference type="ChEBI" id="CHEBI:74411"/>
        <dbReference type="ChEBI" id="CHEBI:74415"/>
        <dbReference type="EC" id="2.5.1.75"/>
    </reaction>
</comment>
<comment type="cofactor">
    <cofactor evidence="1">
        <name>Mg(2+)</name>
        <dbReference type="ChEBI" id="CHEBI:18420"/>
    </cofactor>
</comment>
<comment type="subunit">
    <text evidence="1">Monomer.</text>
</comment>
<comment type="similarity">
    <text evidence="1">Belongs to the IPP transferase family.</text>
</comment>
<comment type="sequence caution" evidence="2">
    <conflict type="erroneous initiation">
        <sequence resource="EMBL-CDS" id="AAD08458"/>
    </conflict>
</comment>
<feature type="chain" id="PRO_0000163925" description="tRNA dimethylallyltransferase">
    <location>
        <begin position="1"/>
        <end position="311"/>
    </location>
</feature>
<feature type="region of interest" description="Interaction with substrate tRNA" evidence="1">
    <location>
        <begin position="44"/>
        <end position="47"/>
    </location>
</feature>
<feature type="binding site" evidence="1">
    <location>
        <begin position="19"/>
        <end position="26"/>
    </location>
    <ligand>
        <name>ATP</name>
        <dbReference type="ChEBI" id="CHEBI:30616"/>
    </ligand>
</feature>
<feature type="binding site" evidence="1">
    <location>
        <begin position="21"/>
        <end position="26"/>
    </location>
    <ligand>
        <name>substrate</name>
    </ligand>
</feature>
<feature type="site" description="Interaction with substrate tRNA" evidence="1">
    <location>
        <position position="108"/>
    </location>
</feature>
<protein>
    <recommendedName>
        <fullName evidence="1">tRNA dimethylallyltransferase</fullName>
        <ecNumber evidence="1">2.5.1.75</ecNumber>
    </recommendedName>
    <alternativeName>
        <fullName evidence="1">Dimethylallyl diphosphate:tRNA dimethylallyltransferase</fullName>
        <shortName evidence="1">DMAPP:tRNA dimethylallyltransferase</shortName>
        <shortName evidence="1">DMATase</shortName>
    </alternativeName>
    <alternativeName>
        <fullName evidence="1">Isopentenyl-diphosphate:tRNA isopentenyltransferase</fullName>
        <shortName evidence="1">IPP transferase</shortName>
        <shortName evidence="1">IPPT</shortName>
        <shortName evidence="1">IPTase</shortName>
    </alternativeName>
</protein>
<reference key="1">
    <citation type="journal article" date="1997" name="Nature">
        <title>The complete genome sequence of the gastric pathogen Helicobacter pylori.</title>
        <authorList>
            <person name="Tomb J.-F."/>
            <person name="White O."/>
            <person name="Kerlavage A.R."/>
            <person name="Clayton R.A."/>
            <person name="Sutton G.G."/>
            <person name="Fleischmann R.D."/>
            <person name="Ketchum K.A."/>
            <person name="Klenk H.-P."/>
            <person name="Gill S.R."/>
            <person name="Dougherty B.A."/>
            <person name="Nelson K.E."/>
            <person name="Quackenbush J."/>
            <person name="Zhou L."/>
            <person name="Kirkness E.F."/>
            <person name="Peterson S.N."/>
            <person name="Loftus B.J."/>
            <person name="Richardson D.L."/>
            <person name="Dodson R.J."/>
            <person name="Khalak H.G."/>
            <person name="Glodek A."/>
            <person name="McKenney K."/>
            <person name="FitzGerald L.M."/>
            <person name="Lee N."/>
            <person name="Adams M.D."/>
            <person name="Hickey E.K."/>
            <person name="Berg D.E."/>
            <person name="Gocayne J.D."/>
            <person name="Utterback T.R."/>
            <person name="Peterson J.D."/>
            <person name="Kelley J.M."/>
            <person name="Cotton M.D."/>
            <person name="Weidman J.F."/>
            <person name="Fujii C."/>
            <person name="Bowman C."/>
            <person name="Watthey L."/>
            <person name="Wallin E."/>
            <person name="Hayes W.S."/>
            <person name="Borodovsky M."/>
            <person name="Karp P.D."/>
            <person name="Smith H.O."/>
            <person name="Fraser C.M."/>
            <person name="Venter J.C."/>
        </authorList>
    </citation>
    <scope>NUCLEOTIDE SEQUENCE [LARGE SCALE GENOMIC DNA]</scope>
    <source>
        <strain>ATCC 700392 / 26695</strain>
    </source>
</reference>
<sequence length="311" mass="35037">MIKEGFLIKTPKKLIALLGPSGSGKSALSIELAQELDAEIFSLDSLSIYKDINIASAKPSLKERKNIKHYALDHLNIDEKNNAPLFKTLLEDAMRVSSKEILLIVGGSSFYLKSILEGLSRMPKLSGEEVVKIEREIATLSNPYIFLKSIDPNMAFKIHPNDTYRTHKALEIFYATCTPPSEYFKANPKKPFEHAISLFALSIEKSALHNNIKRRTKNMLHSGLVEEIKALYTQYPKDSQPFKAIGVKESVLFLEKRLTLKELEEAITSNTMKLAKRQNTFNKTQFNNLYVGSAEEVRHAILKHSKSGIKG</sequence>
<keyword id="KW-0067">ATP-binding</keyword>
<keyword id="KW-0460">Magnesium</keyword>
<keyword id="KW-0547">Nucleotide-binding</keyword>
<keyword id="KW-1185">Reference proteome</keyword>
<keyword id="KW-0808">Transferase</keyword>
<keyword id="KW-0819">tRNA processing</keyword>
<accession>O25961</accession>
<dbReference type="EC" id="2.5.1.75" evidence="1"/>
<dbReference type="EMBL" id="AE000511">
    <property type="protein sequence ID" value="AAD08458.1"/>
    <property type="status" value="ALT_INIT"/>
    <property type="molecule type" value="Genomic_DNA"/>
</dbReference>
<dbReference type="PIR" id="G64696">
    <property type="entry name" value="G64696"/>
</dbReference>
<dbReference type="RefSeq" id="NP_208206.1">
    <property type="nucleotide sequence ID" value="NC_000915.1"/>
</dbReference>
<dbReference type="SMR" id="O25961"/>
<dbReference type="FunCoup" id="O25961">
    <property type="interactions" value="318"/>
</dbReference>
<dbReference type="STRING" id="85962.HP_1415"/>
<dbReference type="PaxDb" id="85962-C694_07315"/>
<dbReference type="DNASU" id="899879"/>
<dbReference type="EnsemblBacteria" id="AAD08458">
    <property type="protein sequence ID" value="AAD08458"/>
    <property type="gene ID" value="HP_1415"/>
</dbReference>
<dbReference type="KEGG" id="hpy:HP_1415"/>
<dbReference type="PATRIC" id="fig|85962.8.peg.1483"/>
<dbReference type="eggNOG" id="COG0324">
    <property type="taxonomic scope" value="Bacteria"/>
</dbReference>
<dbReference type="InParanoid" id="O25961"/>
<dbReference type="OrthoDB" id="9776390at2"/>
<dbReference type="PhylomeDB" id="O25961"/>
<dbReference type="Proteomes" id="UP000000429">
    <property type="component" value="Chromosome"/>
</dbReference>
<dbReference type="GO" id="GO:0005524">
    <property type="term" value="F:ATP binding"/>
    <property type="evidence" value="ECO:0007669"/>
    <property type="project" value="UniProtKB-UniRule"/>
</dbReference>
<dbReference type="GO" id="GO:0052381">
    <property type="term" value="F:tRNA dimethylallyltransferase activity"/>
    <property type="evidence" value="ECO:0000318"/>
    <property type="project" value="GO_Central"/>
</dbReference>
<dbReference type="GO" id="GO:0006400">
    <property type="term" value="P:tRNA modification"/>
    <property type="evidence" value="ECO:0000318"/>
    <property type="project" value="GO_Central"/>
</dbReference>
<dbReference type="Gene3D" id="1.10.20.140">
    <property type="match status" value="1"/>
</dbReference>
<dbReference type="Gene3D" id="3.40.50.300">
    <property type="entry name" value="P-loop containing nucleotide triphosphate hydrolases"/>
    <property type="match status" value="1"/>
</dbReference>
<dbReference type="HAMAP" id="MF_00185">
    <property type="entry name" value="IPP_trans"/>
    <property type="match status" value="1"/>
</dbReference>
<dbReference type="InterPro" id="IPR039657">
    <property type="entry name" value="Dimethylallyltransferase"/>
</dbReference>
<dbReference type="InterPro" id="IPR018022">
    <property type="entry name" value="IPT"/>
</dbReference>
<dbReference type="InterPro" id="IPR027417">
    <property type="entry name" value="P-loop_NTPase"/>
</dbReference>
<dbReference type="NCBIfam" id="TIGR00174">
    <property type="entry name" value="miaA"/>
    <property type="match status" value="1"/>
</dbReference>
<dbReference type="PANTHER" id="PTHR11088">
    <property type="entry name" value="TRNA DIMETHYLALLYLTRANSFERASE"/>
    <property type="match status" value="1"/>
</dbReference>
<dbReference type="PANTHER" id="PTHR11088:SF60">
    <property type="entry name" value="TRNA DIMETHYLALLYLTRANSFERASE"/>
    <property type="match status" value="1"/>
</dbReference>
<dbReference type="Pfam" id="PF01715">
    <property type="entry name" value="IPPT"/>
    <property type="match status" value="1"/>
</dbReference>
<dbReference type="SUPFAM" id="SSF52540">
    <property type="entry name" value="P-loop containing nucleoside triphosphate hydrolases"/>
    <property type="match status" value="1"/>
</dbReference>
<gene>
    <name evidence="1" type="primary">miaA</name>
    <name type="ordered locus">HP_1415</name>
</gene>
<proteinExistence type="inferred from homology"/>
<name>MIAA_HELPY</name>
<organism>
    <name type="scientific">Helicobacter pylori (strain ATCC 700392 / 26695)</name>
    <name type="common">Campylobacter pylori</name>
    <dbReference type="NCBI Taxonomy" id="85962"/>
    <lineage>
        <taxon>Bacteria</taxon>
        <taxon>Pseudomonadati</taxon>
        <taxon>Campylobacterota</taxon>
        <taxon>Epsilonproteobacteria</taxon>
        <taxon>Campylobacterales</taxon>
        <taxon>Helicobacteraceae</taxon>
        <taxon>Helicobacter</taxon>
    </lineage>
</organism>